<comment type="function">
    <text evidence="1">Component of the mitochondrial ribosome (mitoribosome), a dedicated translation machinery responsible for the synthesis of mitochondrial genome-encoded proteins, including at least some of the essential transmembrane subunits of the mitochondrial respiratory chain. The mitoribosomes are attached to the mitochondrial inner membrane and translation products are cotranslationally integrated into the membrane.</text>
</comment>
<comment type="subunit">
    <text evidence="1">Component of the mitochondrial large ribosomal subunit (mt-LSU). Mature yeast 74S mitochondrial ribosomes consist of a small (37S) and a large (54S) subunit. The 37S small subunit contains a 15S ribosomal RNA (15S mt-rRNA) and at least 32 different proteins. The 54S large subunit contains a 21S rRNA (21S mt-rRNA) and at least 45 different proteins.</text>
</comment>
<comment type="subcellular location">
    <subcellularLocation>
        <location evidence="2">Mitochondrion</location>
    </subcellularLocation>
</comment>
<comment type="similarity">
    <text evidence="3">Belongs to the universal ribosomal protein uL14 family.</text>
</comment>
<keyword id="KW-0496">Mitochondrion</keyword>
<keyword id="KW-1185">Reference proteome</keyword>
<keyword id="KW-0687">Ribonucleoprotein</keyword>
<keyword id="KW-0689">Ribosomal protein</keyword>
<reference key="1">
    <citation type="journal article" date="2002" name="Nature">
        <title>The genome sequence of Schizosaccharomyces pombe.</title>
        <authorList>
            <person name="Wood V."/>
            <person name="Gwilliam R."/>
            <person name="Rajandream M.A."/>
            <person name="Lyne M.H."/>
            <person name="Lyne R."/>
            <person name="Stewart A."/>
            <person name="Sgouros J.G."/>
            <person name="Peat N."/>
            <person name="Hayles J."/>
            <person name="Baker S.G."/>
            <person name="Basham D."/>
            <person name="Bowman S."/>
            <person name="Brooks K."/>
            <person name="Brown D."/>
            <person name="Brown S."/>
            <person name="Chillingworth T."/>
            <person name="Churcher C.M."/>
            <person name="Collins M."/>
            <person name="Connor R."/>
            <person name="Cronin A."/>
            <person name="Davis P."/>
            <person name="Feltwell T."/>
            <person name="Fraser A."/>
            <person name="Gentles S."/>
            <person name="Goble A."/>
            <person name="Hamlin N."/>
            <person name="Harris D.E."/>
            <person name="Hidalgo J."/>
            <person name="Hodgson G."/>
            <person name="Holroyd S."/>
            <person name="Hornsby T."/>
            <person name="Howarth S."/>
            <person name="Huckle E.J."/>
            <person name="Hunt S."/>
            <person name="Jagels K."/>
            <person name="James K.D."/>
            <person name="Jones L."/>
            <person name="Jones M."/>
            <person name="Leather S."/>
            <person name="McDonald S."/>
            <person name="McLean J."/>
            <person name="Mooney P."/>
            <person name="Moule S."/>
            <person name="Mungall K.L."/>
            <person name="Murphy L.D."/>
            <person name="Niblett D."/>
            <person name="Odell C."/>
            <person name="Oliver K."/>
            <person name="O'Neil S."/>
            <person name="Pearson D."/>
            <person name="Quail M.A."/>
            <person name="Rabbinowitsch E."/>
            <person name="Rutherford K.M."/>
            <person name="Rutter S."/>
            <person name="Saunders D."/>
            <person name="Seeger K."/>
            <person name="Sharp S."/>
            <person name="Skelton J."/>
            <person name="Simmonds M.N."/>
            <person name="Squares R."/>
            <person name="Squares S."/>
            <person name="Stevens K."/>
            <person name="Taylor K."/>
            <person name="Taylor R.G."/>
            <person name="Tivey A."/>
            <person name="Walsh S.V."/>
            <person name="Warren T."/>
            <person name="Whitehead S."/>
            <person name="Woodward J.R."/>
            <person name="Volckaert G."/>
            <person name="Aert R."/>
            <person name="Robben J."/>
            <person name="Grymonprez B."/>
            <person name="Weltjens I."/>
            <person name="Vanstreels E."/>
            <person name="Rieger M."/>
            <person name="Schaefer M."/>
            <person name="Mueller-Auer S."/>
            <person name="Gabel C."/>
            <person name="Fuchs M."/>
            <person name="Duesterhoeft A."/>
            <person name="Fritzc C."/>
            <person name="Holzer E."/>
            <person name="Moestl D."/>
            <person name="Hilbert H."/>
            <person name="Borzym K."/>
            <person name="Langer I."/>
            <person name="Beck A."/>
            <person name="Lehrach H."/>
            <person name="Reinhardt R."/>
            <person name="Pohl T.M."/>
            <person name="Eger P."/>
            <person name="Zimmermann W."/>
            <person name="Wedler H."/>
            <person name="Wambutt R."/>
            <person name="Purnelle B."/>
            <person name="Goffeau A."/>
            <person name="Cadieu E."/>
            <person name="Dreano S."/>
            <person name="Gloux S."/>
            <person name="Lelaure V."/>
            <person name="Mottier S."/>
            <person name="Galibert F."/>
            <person name="Aves S.J."/>
            <person name="Xiang Z."/>
            <person name="Hunt C."/>
            <person name="Moore K."/>
            <person name="Hurst S.M."/>
            <person name="Lucas M."/>
            <person name="Rochet M."/>
            <person name="Gaillardin C."/>
            <person name="Tallada V.A."/>
            <person name="Garzon A."/>
            <person name="Thode G."/>
            <person name="Daga R.R."/>
            <person name="Cruzado L."/>
            <person name="Jimenez J."/>
            <person name="Sanchez M."/>
            <person name="del Rey F."/>
            <person name="Benito J."/>
            <person name="Dominguez A."/>
            <person name="Revuelta J.L."/>
            <person name="Moreno S."/>
            <person name="Armstrong J."/>
            <person name="Forsburg S.L."/>
            <person name="Cerutti L."/>
            <person name="Lowe T."/>
            <person name="McCombie W.R."/>
            <person name="Paulsen I."/>
            <person name="Potashkin J."/>
            <person name="Shpakovski G.V."/>
            <person name="Ussery D."/>
            <person name="Barrell B.G."/>
            <person name="Nurse P."/>
        </authorList>
    </citation>
    <scope>NUCLEOTIDE SEQUENCE [LARGE SCALE GENOMIC DNA]</scope>
    <source>
        <strain>972 / ATCC 24843</strain>
    </source>
</reference>
<reference key="2">
    <citation type="journal article" date="2011" name="Science">
        <title>Comparative functional genomics of the fission yeasts.</title>
        <authorList>
            <person name="Rhind N."/>
            <person name="Chen Z."/>
            <person name="Yassour M."/>
            <person name="Thompson D.A."/>
            <person name="Haas B.J."/>
            <person name="Habib N."/>
            <person name="Wapinski I."/>
            <person name="Roy S."/>
            <person name="Lin M.F."/>
            <person name="Heiman D.I."/>
            <person name="Young S.K."/>
            <person name="Furuya K."/>
            <person name="Guo Y."/>
            <person name="Pidoux A."/>
            <person name="Chen H.M."/>
            <person name="Robbertse B."/>
            <person name="Goldberg J.M."/>
            <person name="Aoki K."/>
            <person name="Bayne E.H."/>
            <person name="Berlin A.M."/>
            <person name="Desjardins C.A."/>
            <person name="Dobbs E."/>
            <person name="Dukaj L."/>
            <person name="Fan L."/>
            <person name="FitzGerald M.G."/>
            <person name="French C."/>
            <person name="Gujja S."/>
            <person name="Hansen K."/>
            <person name="Keifenheim D."/>
            <person name="Levin J.Z."/>
            <person name="Mosher R.A."/>
            <person name="Mueller C.A."/>
            <person name="Pfiffner J."/>
            <person name="Priest M."/>
            <person name="Russ C."/>
            <person name="Smialowska A."/>
            <person name="Swoboda P."/>
            <person name="Sykes S.M."/>
            <person name="Vaughn M."/>
            <person name="Vengrova S."/>
            <person name="Yoder R."/>
            <person name="Zeng Q."/>
            <person name="Allshire R."/>
            <person name="Baulcombe D."/>
            <person name="Birren B.W."/>
            <person name="Brown W."/>
            <person name="Ekwall K."/>
            <person name="Kellis M."/>
            <person name="Leatherwood J."/>
            <person name="Levin H."/>
            <person name="Margalit H."/>
            <person name="Martienssen R."/>
            <person name="Nieduszynski C.A."/>
            <person name="Spatafora J.W."/>
            <person name="Friedman N."/>
            <person name="Dalgaard J.Z."/>
            <person name="Baumann P."/>
            <person name="Niki H."/>
            <person name="Regev A."/>
            <person name="Nusbaum C."/>
        </authorList>
    </citation>
    <scope>REVISION OF GENE MODEL</scope>
</reference>
<reference key="3">
    <citation type="journal article" date="2006" name="Nat. Biotechnol.">
        <title>ORFeome cloning and global analysis of protein localization in the fission yeast Schizosaccharomyces pombe.</title>
        <authorList>
            <person name="Matsuyama A."/>
            <person name="Arai R."/>
            <person name="Yashiroda Y."/>
            <person name="Shirai A."/>
            <person name="Kamata A."/>
            <person name="Sekido S."/>
            <person name="Kobayashi Y."/>
            <person name="Hashimoto A."/>
            <person name="Hamamoto M."/>
            <person name="Hiraoka Y."/>
            <person name="Horinouchi S."/>
            <person name="Yoshida M."/>
        </authorList>
    </citation>
    <scope>SUBCELLULAR LOCATION [LARGE SCALE ANALYSIS]</scope>
</reference>
<protein>
    <recommendedName>
        <fullName evidence="3">Large ribosomal subunit protein uL14m</fullName>
    </recommendedName>
    <alternativeName>
        <fullName>54S ribosomal protein L38, mitochondrial</fullName>
    </alternativeName>
</protein>
<accession>O94292</accession>
<accession>A0AAN2H8G1</accession>
<dbReference type="EMBL" id="CU329671">
    <property type="protein sequence ID" value="CAK9840792.1"/>
    <property type="molecule type" value="Genomic_DNA"/>
</dbReference>
<dbReference type="PIR" id="T40732">
    <property type="entry name" value="T40732"/>
</dbReference>
<dbReference type="RefSeq" id="NP_596481.2">
    <property type="nucleotide sequence ID" value="NM_001022401.2"/>
</dbReference>
<dbReference type="SMR" id="O94292"/>
<dbReference type="BioGRID" id="277746">
    <property type="interactions" value="1"/>
</dbReference>
<dbReference type="ComplexPortal" id="CPX-10323">
    <property type="entry name" value="54S mitochondrial large ribosomal subunit"/>
</dbReference>
<dbReference type="FunCoup" id="O94292">
    <property type="interactions" value="110"/>
</dbReference>
<dbReference type="STRING" id="284812.O94292"/>
<dbReference type="PaxDb" id="4896-SPBC887.07.1"/>
<dbReference type="EnsemblFungi" id="SPBC887.07.1">
    <property type="protein sequence ID" value="SPBC887.07.1:pep"/>
    <property type="gene ID" value="SPBC887.07"/>
</dbReference>
<dbReference type="GeneID" id="2541232"/>
<dbReference type="KEGG" id="spo:2541232"/>
<dbReference type="PomBase" id="SPBC887.07">
    <property type="gene designation" value="mrpl38"/>
</dbReference>
<dbReference type="VEuPathDB" id="FungiDB:SPBC887.07"/>
<dbReference type="eggNOG" id="KOG0901">
    <property type="taxonomic scope" value="Eukaryota"/>
</dbReference>
<dbReference type="HOGENOM" id="CLU_095071_2_0_1"/>
<dbReference type="InParanoid" id="O94292"/>
<dbReference type="OMA" id="IVCVVQK"/>
<dbReference type="PRO" id="PR:O94292"/>
<dbReference type="Proteomes" id="UP000002485">
    <property type="component" value="Chromosome II"/>
</dbReference>
<dbReference type="GO" id="GO:0005762">
    <property type="term" value="C:mitochondrial large ribosomal subunit"/>
    <property type="evidence" value="ECO:0000318"/>
    <property type="project" value="GO_Central"/>
</dbReference>
<dbReference type="GO" id="GO:0005739">
    <property type="term" value="C:mitochondrion"/>
    <property type="evidence" value="ECO:0007005"/>
    <property type="project" value="PomBase"/>
</dbReference>
<dbReference type="GO" id="GO:0070180">
    <property type="term" value="F:large ribosomal subunit rRNA binding"/>
    <property type="evidence" value="ECO:0000318"/>
    <property type="project" value="GO_Central"/>
</dbReference>
<dbReference type="GO" id="GO:0003735">
    <property type="term" value="F:structural constituent of ribosome"/>
    <property type="evidence" value="ECO:0000318"/>
    <property type="project" value="GO_Central"/>
</dbReference>
<dbReference type="GO" id="GO:0032543">
    <property type="term" value="P:mitochondrial translation"/>
    <property type="evidence" value="ECO:0000250"/>
    <property type="project" value="PomBase"/>
</dbReference>
<dbReference type="CDD" id="cd00337">
    <property type="entry name" value="Ribosomal_uL14"/>
    <property type="match status" value="1"/>
</dbReference>
<dbReference type="FunFam" id="2.40.150.20:FF:000005">
    <property type="entry name" value="50S ribosomal protein L14"/>
    <property type="match status" value="1"/>
</dbReference>
<dbReference type="Gene3D" id="2.40.150.20">
    <property type="entry name" value="Ribosomal protein L14"/>
    <property type="match status" value="1"/>
</dbReference>
<dbReference type="HAMAP" id="MF_01367">
    <property type="entry name" value="Ribosomal_uL14"/>
    <property type="match status" value="1"/>
</dbReference>
<dbReference type="InterPro" id="IPR000218">
    <property type="entry name" value="Ribosomal_uL14"/>
</dbReference>
<dbReference type="InterPro" id="IPR005745">
    <property type="entry name" value="Ribosomal_uL14_bac-type"/>
</dbReference>
<dbReference type="InterPro" id="IPR019972">
    <property type="entry name" value="Ribosomal_uL14_CS"/>
</dbReference>
<dbReference type="InterPro" id="IPR036853">
    <property type="entry name" value="Ribosomal_uL14_sf"/>
</dbReference>
<dbReference type="NCBIfam" id="TIGR01067">
    <property type="entry name" value="rplN_bact"/>
    <property type="match status" value="1"/>
</dbReference>
<dbReference type="PANTHER" id="PTHR11761">
    <property type="entry name" value="50S/60S RIBOSOMAL PROTEIN L14/L23"/>
    <property type="match status" value="1"/>
</dbReference>
<dbReference type="PANTHER" id="PTHR11761:SF3">
    <property type="entry name" value="LARGE RIBOSOMAL SUBUNIT PROTEIN UL14M"/>
    <property type="match status" value="1"/>
</dbReference>
<dbReference type="Pfam" id="PF00238">
    <property type="entry name" value="Ribosomal_L14"/>
    <property type="match status" value="1"/>
</dbReference>
<dbReference type="SMART" id="SM01374">
    <property type="entry name" value="Ribosomal_L14"/>
    <property type="match status" value="1"/>
</dbReference>
<dbReference type="SUPFAM" id="SSF50193">
    <property type="entry name" value="Ribosomal protein L14"/>
    <property type="match status" value="1"/>
</dbReference>
<dbReference type="PROSITE" id="PS00049">
    <property type="entry name" value="RIBOSOMAL_L14"/>
    <property type="match status" value="1"/>
</dbReference>
<feature type="chain" id="PRO_0000310370" description="Large ribosomal subunit protein uL14m">
    <location>
        <begin position="1"/>
        <end position="126"/>
    </location>
</feature>
<evidence type="ECO:0000250" key="1">
    <source>
        <dbReference type="UniProtKB" id="P35996"/>
    </source>
</evidence>
<evidence type="ECO:0000269" key="2">
    <source>
    </source>
</evidence>
<evidence type="ECO:0000305" key="3"/>
<evidence type="ECO:0000312" key="4">
    <source>
        <dbReference type="PomBase" id="SPBC887.07"/>
    </source>
</evidence>
<organism>
    <name type="scientific">Schizosaccharomyces pombe (strain 972 / ATCC 24843)</name>
    <name type="common">Fission yeast</name>
    <dbReference type="NCBI Taxonomy" id="284812"/>
    <lineage>
        <taxon>Eukaryota</taxon>
        <taxon>Fungi</taxon>
        <taxon>Dikarya</taxon>
        <taxon>Ascomycota</taxon>
        <taxon>Taphrinomycotina</taxon>
        <taxon>Schizosaccharomycetes</taxon>
        <taxon>Schizosaccharomycetales</taxon>
        <taxon>Schizosaccharomycetaceae</taxon>
        <taxon>Schizosaccharomyces</taxon>
    </lineage>
</organism>
<gene>
    <name type="primary">mrpl38</name>
    <name evidence="4" type="ORF">SPBC887.07</name>
</gene>
<sequence length="126" mass="13650">MIGLKGILKVIDNSGATLAECIRVVRAGKFASLGDEVVVVVKKARSGSSVTAANKVKRGDIHHAIIVRTKSPVRRPDGRYVRFDDNACVLVNKECEPLGTRILSVVANELRTKHHTKIASLAPRTI</sequence>
<name>RM38_SCHPO</name>
<proteinExistence type="inferred from homology"/>